<accession>A4IMH1</accession>
<dbReference type="EC" id="3.1.-.-" evidence="1"/>
<dbReference type="EMBL" id="CP000557">
    <property type="protein sequence ID" value="ABO66525.1"/>
    <property type="molecule type" value="Genomic_DNA"/>
</dbReference>
<dbReference type="RefSeq" id="WP_011887171.1">
    <property type="nucleotide sequence ID" value="NC_009328.1"/>
</dbReference>
<dbReference type="SMR" id="A4IMH1"/>
<dbReference type="KEGG" id="gtn:GTNG_1151"/>
<dbReference type="eggNOG" id="COG1418">
    <property type="taxonomic scope" value="Bacteria"/>
</dbReference>
<dbReference type="HOGENOM" id="CLU_028328_1_0_9"/>
<dbReference type="Proteomes" id="UP000001578">
    <property type="component" value="Chromosome"/>
</dbReference>
<dbReference type="GO" id="GO:0005886">
    <property type="term" value="C:plasma membrane"/>
    <property type="evidence" value="ECO:0007669"/>
    <property type="project" value="UniProtKB-SubCell"/>
</dbReference>
<dbReference type="GO" id="GO:0003723">
    <property type="term" value="F:RNA binding"/>
    <property type="evidence" value="ECO:0007669"/>
    <property type="project" value="UniProtKB-UniRule"/>
</dbReference>
<dbReference type="GO" id="GO:0004521">
    <property type="term" value="F:RNA endonuclease activity"/>
    <property type="evidence" value="ECO:0007669"/>
    <property type="project" value="UniProtKB-UniRule"/>
</dbReference>
<dbReference type="GO" id="GO:0006402">
    <property type="term" value="P:mRNA catabolic process"/>
    <property type="evidence" value="ECO:0007669"/>
    <property type="project" value="UniProtKB-UniRule"/>
</dbReference>
<dbReference type="CDD" id="cd00077">
    <property type="entry name" value="HDc"/>
    <property type="match status" value="1"/>
</dbReference>
<dbReference type="CDD" id="cd22431">
    <property type="entry name" value="KH-I_RNaseY"/>
    <property type="match status" value="1"/>
</dbReference>
<dbReference type="FunFam" id="1.10.3210.10:FF:000003">
    <property type="entry name" value="Ribonuclease Y"/>
    <property type="match status" value="1"/>
</dbReference>
<dbReference type="FunFam" id="3.30.1370.10:FF:000006">
    <property type="entry name" value="Ribonuclease Y"/>
    <property type="match status" value="1"/>
</dbReference>
<dbReference type="Gene3D" id="1.10.3210.10">
    <property type="entry name" value="Hypothetical protein af1432"/>
    <property type="match status" value="1"/>
</dbReference>
<dbReference type="Gene3D" id="3.30.1370.10">
    <property type="entry name" value="K Homology domain, type 1"/>
    <property type="match status" value="1"/>
</dbReference>
<dbReference type="HAMAP" id="MF_00335">
    <property type="entry name" value="RNase_Y"/>
    <property type="match status" value="1"/>
</dbReference>
<dbReference type="InterPro" id="IPR003607">
    <property type="entry name" value="HD/PDEase_dom"/>
</dbReference>
<dbReference type="InterPro" id="IPR006674">
    <property type="entry name" value="HD_domain"/>
</dbReference>
<dbReference type="InterPro" id="IPR006675">
    <property type="entry name" value="HDIG_dom"/>
</dbReference>
<dbReference type="InterPro" id="IPR004087">
    <property type="entry name" value="KH_dom"/>
</dbReference>
<dbReference type="InterPro" id="IPR004088">
    <property type="entry name" value="KH_dom_type_1"/>
</dbReference>
<dbReference type="InterPro" id="IPR036612">
    <property type="entry name" value="KH_dom_type_1_sf"/>
</dbReference>
<dbReference type="InterPro" id="IPR017705">
    <property type="entry name" value="Ribonuclease_Y"/>
</dbReference>
<dbReference type="InterPro" id="IPR022711">
    <property type="entry name" value="RNase_Y_N"/>
</dbReference>
<dbReference type="NCBIfam" id="TIGR00277">
    <property type="entry name" value="HDIG"/>
    <property type="match status" value="1"/>
</dbReference>
<dbReference type="NCBIfam" id="TIGR03319">
    <property type="entry name" value="RNase_Y"/>
    <property type="match status" value="1"/>
</dbReference>
<dbReference type="PANTHER" id="PTHR12826">
    <property type="entry name" value="RIBONUCLEASE Y"/>
    <property type="match status" value="1"/>
</dbReference>
<dbReference type="PANTHER" id="PTHR12826:SF15">
    <property type="entry name" value="RIBONUCLEASE Y"/>
    <property type="match status" value="1"/>
</dbReference>
<dbReference type="Pfam" id="PF01966">
    <property type="entry name" value="HD"/>
    <property type="match status" value="1"/>
</dbReference>
<dbReference type="Pfam" id="PF00013">
    <property type="entry name" value="KH_1"/>
    <property type="match status" value="1"/>
</dbReference>
<dbReference type="Pfam" id="PF12072">
    <property type="entry name" value="RNase_Y_N"/>
    <property type="match status" value="1"/>
</dbReference>
<dbReference type="SMART" id="SM00471">
    <property type="entry name" value="HDc"/>
    <property type="match status" value="1"/>
</dbReference>
<dbReference type="SMART" id="SM00322">
    <property type="entry name" value="KH"/>
    <property type="match status" value="1"/>
</dbReference>
<dbReference type="SUPFAM" id="SSF54791">
    <property type="entry name" value="Eukaryotic type KH-domain (KH-domain type I)"/>
    <property type="match status" value="1"/>
</dbReference>
<dbReference type="SUPFAM" id="SSF109604">
    <property type="entry name" value="HD-domain/PDEase-like"/>
    <property type="match status" value="1"/>
</dbReference>
<dbReference type="PROSITE" id="PS51831">
    <property type="entry name" value="HD"/>
    <property type="match status" value="1"/>
</dbReference>
<dbReference type="PROSITE" id="PS50084">
    <property type="entry name" value="KH_TYPE_1"/>
    <property type="match status" value="1"/>
</dbReference>
<sequence length="518" mass="58123">MGSIIISALLALVIGAVVGFFVRKSIAEAKIGGAKAAAEQLIEEAKRAADALKKEALLEAKDEIHKLRTEAEHDIRDRRSELQKQENRLMQKEENLDRKDEALNKREALLEAKEEALNERQQHIEQMESKVETLIKQQQTELERISGLTRDDARHLILERVEKELSHEIAMMVKEAETRAKEEADKRAKAILSLAIQRCAADHVAETTVSVVNLPNDEMKGRIIGREGRNIRTLETLTGIDLIIDDTPEAVILSGFDPIRRETARIALDKLVQDGRIHPARIEEMVGKARREVDEHIREVGEQTTFEVGVHGLHPDLIKILGRLKFRTSYGQNVLKHSVEVAFLAGLMAAELGEDEMLARRAGLLHDIGKAIDHEVEGSHVEIGVELATKYKEHPVVINSIASHHGDTEPTSVIAVLVAAADALSAARPGARSETLENYIRRLEKLEEIAESYEGVEKSYAIQAGREVRIMVKPDMIDDLEAHRLARDIRKRIEEELDYPGHIKVTVIRETRAVEYAK</sequence>
<comment type="function">
    <text evidence="1">Endoribonuclease that initiates mRNA decay.</text>
</comment>
<comment type="subcellular location">
    <subcellularLocation>
        <location evidence="1">Cell membrane</location>
        <topology evidence="1">Single-pass membrane protein</topology>
    </subcellularLocation>
</comment>
<comment type="similarity">
    <text evidence="1">Belongs to the RNase Y family.</text>
</comment>
<name>RNY_GEOTN</name>
<protein>
    <recommendedName>
        <fullName evidence="1">Ribonuclease Y</fullName>
        <shortName evidence="1">RNase Y</shortName>
        <ecNumber evidence="1">3.1.-.-</ecNumber>
    </recommendedName>
</protein>
<proteinExistence type="inferred from homology"/>
<gene>
    <name evidence="1" type="primary">rny</name>
    <name type="ordered locus">GTNG_1151</name>
</gene>
<organism>
    <name type="scientific">Geobacillus thermodenitrificans (strain NG80-2)</name>
    <dbReference type="NCBI Taxonomy" id="420246"/>
    <lineage>
        <taxon>Bacteria</taxon>
        <taxon>Bacillati</taxon>
        <taxon>Bacillota</taxon>
        <taxon>Bacilli</taxon>
        <taxon>Bacillales</taxon>
        <taxon>Anoxybacillaceae</taxon>
        <taxon>Geobacillus</taxon>
    </lineage>
</organism>
<reference key="1">
    <citation type="journal article" date="2007" name="Proc. Natl. Acad. Sci. U.S.A.">
        <title>Genome and proteome of long-chain alkane degrading Geobacillus thermodenitrificans NG80-2 isolated from a deep-subsurface oil reservoir.</title>
        <authorList>
            <person name="Feng L."/>
            <person name="Wang W."/>
            <person name="Cheng J."/>
            <person name="Ren Y."/>
            <person name="Zhao G."/>
            <person name="Gao C."/>
            <person name="Tang Y."/>
            <person name="Liu X."/>
            <person name="Han W."/>
            <person name="Peng X."/>
            <person name="Liu R."/>
            <person name="Wang L."/>
        </authorList>
    </citation>
    <scope>NUCLEOTIDE SEQUENCE [LARGE SCALE GENOMIC DNA]</scope>
    <source>
        <strain>NG80-2</strain>
    </source>
</reference>
<keyword id="KW-1003">Cell membrane</keyword>
<keyword id="KW-0255">Endonuclease</keyword>
<keyword id="KW-0378">Hydrolase</keyword>
<keyword id="KW-0472">Membrane</keyword>
<keyword id="KW-0540">Nuclease</keyword>
<keyword id="KW-0694">RNA-binding</keyword>
<keyword id="KW-0812">Transmembrane</keyword>
<keyword id="KW-1133">Transmembrane helix</keyword>
<feature type="chain" id="PRO_0000344880" description="Ribonuclease Y">
    <location>
        <begin position="1"/>
        <end position="518"/>
    </location>
</feature>
<feature type="transmembrane region" description="Helical" evidence="1">
    <location>
        <begin position="2"/>
        <end position="22"/>
    </location>
</feature>
<feature type="domain" description="KH" evidence="1">
    <location>
        <begin position="208"/>
        <end position="271"/>
    </location>
</feature>
<feature type="domain" description="HD" evidence="2">
    <location>
        <begin position="334"/>
        <end position="427"/>
    </location>
</feature>
<evidence type="ECO:0000255" key="1">
    <source>
        <dbReference type="HAMAP-Rule" id="MF_00335"/>
    </source>
</evidence>
<evidence type="ECO:0000255" key="2">
    <source>
        <dbReference type="PROSITE-ProRule" id="PRU01175"/>
    </source>
</evidence>